<protein>
    <recommendedName>
        <fullName>Hsp70 nucleotide exchange factor FES1</fullName>
    </recommendedName>
</protein>
<reference key="1">
    <citation type="journal article" date="2004" name="Nature">
        <title>Genome evolution in yeasts.</title>
        <authorList>
            <person name="Dujon B."/>
            <person name="Sherman D."/>
            <person name="Fischer G."/>
            <person name="Durrens P."/>
            <person name="Casaregola S."/>
            <person name="Lafontaine I."/>
            <person name="de Montigny J."/>
            <person name="Marck C."/>
            <person name="Neuveglise C."/>
            <person name="Talla E."/>
            <person name="Goffard N."/>
            <person name="Frangeul L."/>
            <person name="Aigle M."/>
            <person name="Anthouard V."/>
            <person name="Babour A."/>
            <person name="Barbe V."/>
            <person name="Barnay S."/>
            <person name="Blanchin S."/>
            <person name="Beckerich J.-M."/>
            <person name="Beyne E."/>
            <person name="Bleykasten C."/>
            <person name="Boisrame A."/>
            <person name="Boyer J."/>
            <person name="Cattolico L."/>
            <person name="Confanioleri F."/>
            <person name="de Daruvar A."/>
            <person name="Despons L."/>
            <person name="Fabre E."/>
            <person name="Fairhead C."/>
            <person name="Ferry-Dumazet H."/>
            <person name="Groppi A."/>
            <person name="Hantraye F."/>
            <person name="Hennequin C."/>
            <person name="Jauniaux N."/>
            <person name="Joyet P."/>
            <person name="Kachouri R."/>
            <person name="Kerrest A."/>
            <person name="Koszul R."/>
            <person name="Lemaire M."/>
            <person name="Lesur I."/>
            <person name="Ma L."/>
            <person name="Muller H."/>
            <person name="Nicaud J.-M."/>
            <person name="Nikolski M."/>
            <person name="Oztas S."/>
            <person name="Ozier-Kalogeropoulos O."/>
            <person name="Pellenz S."/>
            <person name="Potier S."/>
            <person name="Richard G.-F."/>
            <person name="Straub M.-L."/>
            <person name="Suleau A."/>
            <person name="Swennen D."/>
            <person name="Tekaia F."/>
            <person name="Wesolowski-Louvel M."/>
            <person name="Westhof E."/>
            <person name="Wirth B."/>
            <person name="Zeniou-Meyer M."/>
            <person name="Zivanovic Y."/>
            <person name="Bolotin-Fukuhara M."/>
            <person name="Thierry A."/>
            <person name="Bouchier C."/>
            <person name="Caudron B."/>
            <person name="Scarpelli C."/>
            <person name="Gaillardin C."/>
            <person name="Weissenbach J."/>
            <person name="Wincker P."/>
            <person name="Souciet J.-L."/>
        </authorList>
    </citation>
    <scope>NUCLEOTIDE SEQUENCE [LARGE SCALE GENOMIC DNA]</scope>
    <source>
        <strain>CLIB 122 / E 150</strain>
    </source>
</reference>
<keyword id="KW-0963">Cytoplasm</keyword>
<keyword id="KW-1185">Reference proteome</keyword>
<keyword id="KW-0677">Repeat</keyword>
<keyword id="KW-0810">Translation regulation</keyword>
<proteinExistence type="inferred from homology"/>
<gene>
    <name type="primary">FES1</name>
    <name type="ordered locus">YALI0F11121g</name>
</gene>
<comment type="function">
    <text evidence="1">Functions as a nucleotide exchange factor (NEF) for Hsp70 chaperones which accelerates the release of ADP. Required for fully efficient Hsp70-mediated folding of proteins (By similarity).</text>
</comment>
<comment type="subcellular location">
    <subcellularLocation>
        <location evidence="1">Cytoplasm</location>
    </subcellularLocation>
</comment>
<comment type="similarity">
    <text evidence="2">Belongs to the FES1 family.</text>
</comment>
<evidence type="ECO:0000250" key="1"/>
<evidence type="ECO:0000305" key="2"/>
<sequence length="280" mass="31249">MDKLLAWSVKQQQEGTNEPPPDPKLLAQLFGAPDDAQLMVQAMVVITQPDNKLEDKEVAFDNFEMLVENLDNANMMKNLKLWEPLLAQLSSPHPSLQKLAAWVVATATQNNPKSQEALVEQGDAGIKKLVDLTSHDDPEVVVKSLFALASAIRNCDDAYKLFESADGLKKVVGHLKPDATAQVKSKTLGVLTGILESETDLMKPEEKRQVFDILVKELETDDHIPSLERSLHVLVLLNQKGFPFTPEETEQVKKAAKRVEGKLDEEDVKYNEDLKYVNNL</sequence>
<accession>Q6C239</accession>
<feature type="chain" id="PRO_0000285403" description="Hsp70 nucleotide exchange factor FES1">
    <location>
        <begin position="1"/>
        <end position="280"/>
    </location>
</feature>
<feature type="repeat" description="ARM 1">
    <location>
        <begin position="10"/>
        <end position="51"/>
    </location>
</feature>
<feature type="repeat" description="ARM 2">
    <location>
        <begin position="70"/>
        <end position="109"/>
    </location>
</feature>
<feature type="repeat" description="ARM 3">
    <location>
        <begin position="112"/>
        <end position="153"/>
    </location>
</feature>
<feature type="repeat" description="ARM 4">
    <location>
        <begin position="156"/>
        <end position="196"/>
    </location>
</feature>
<feature type="repeat" description="ARM 5">
    <location>
        <begin position="199"/>
        <end position="239"/>
    </location>
</feature>
<name>FES1_YARLI</name>
<dbReference type="EMBL" id="CR382132">
    <property type="protein sequence ID" value="CAG78080.1"/>
    <property type="molecule type" value="Genomic_DNA"/>
</dbReference>
<dbReference type="RefSeq" id="XP_505273.1">
    <property type="nucleotide sequence ID" value="XM_505273.1"/>
</dbReference>
<dbReference type="SMR" id="Q6C239"/>
<dbReference type="FunCoup" id="Q6C239">
    <property type="interactions" value="207"/>
</dbReference>
<dbReference type="STRING" id="284591.Q6C239"/>
<dbReference type="EnsemblFungi" id="CAG78080">
    <property type="protein sequence ID" value="CAG78080"/>
    <property type="gene ID" value="YALI0_F11121g"/>
</dbReference>
<dbReference type="KEGG" id="yli:2908179"/>
<dbReference type="VEuPathDB" id="FungiDB:YALI0_F11121g"/>
<dbReference type="HOGENOM" id="CLU_046722_1_0_1"/>
<dbReference type="InParanoid" id="Q6C239"/>
<dbReference type="OMA" id="VDYGHEK"/>
<dbReference type="OrthoDB" id="109445at4891"/>
<dbReference type="Proteomes" id="UP000001300">
    <property type="component" value="Chromosome F"/>
</dbReference>
<dbReference type="GO" id="GO:0005829">
    <property type="term" value="C:cytosol"/>
    <property type="evidence" value="ECO:0007669"/>
    <property type="project" value="EnsemblFungi"/>
</dbReference>
<dbReference type="GO" id="GO:0005783">
    <property type="term" value="C:endoplasmic reticulum"/>
    <property type="evidence" value="ECO:0000318"/>
    <property type="project" value="GO_Central"/>
</dbReference>
<dbReference type="GO" id="GO:0000774">
    <property type="term" value="F:adenyl-nucleotide exchange factor activity"/>
    <property type="evidence" value="ECO:0000318"/>
    <property type="project" value="GO_Central"/>
</dbReference>
<dbReference type="GO" id="GO:0035091">
    <property type="term" value="F:phosphatidylinositol binding"/>
    <property type="evidence" value="ECO:0007669"/>
    <property type="project" value="InterPro"/>
</dbReference>
<dbReference type="GO" id="GO:0043130">
    <property type="term" value="F:ubiquitin binding"/>
    <property type="evidence" value="ECO:0007669"/>
    <property type="project" value="InterPro"/>
</dbReference>
<dbReference type="GO" id="GO:0071629">
    <property type="term" value="P:cytoplasm protein quality control by the ubiquitin-proteasome system"/>
    <property type="evidence" value="ECO:0007669"/>
    <property type="project" value="EnsemblFungi"/>
</dbReference>
<dbReference type="GO" id="GO:0006417">
    <property type="term" value="P:regulation of translation"/>
    <property type="evidence" value="ECO:0007669"/>
    <property type="project" value="UniProtKB-KW"/>
</dbReference>
<dbReference type="Gene3D" id="1.25.10.10">
    <property type="entry name" value="Leucine-rich Repeat Variant"/>
    <property type="match status" value="1"/>
</dbReference>
<dbReference type="InterPro" id="IPR011989">
    <property type="entry name" value="ARM-like"/>
</dbReference>
<dbReference type="InterPro" id="IPR016024">
    <property type="entry name" value="ARM-type_fold"/>
</dbReference>
<dbReference type="InterPro" id="IPR000225">
    <property type="entry name" value="Armadillo"/>
</dbReference>
<dbReference type="InterPro" id="IPR050693">
    <property type="entry name" value="Hsp70_NEF-Inhibitors"/>
</dbReference>
<dbReference type="InterPro" id="IPR013918">
    <property type="entry name" value="Nucleotide_exch_fac_Fes1"/>
</dbReference>
<dbReference type="InterPro" id="IPR002014">
    <property type="entry name" value="VHS_dom"/>
</dbReference>
<dbReference type="PANTHER" id="PTHR19316:SF18">
    <property type="entry name" value="HSP70-BINDING PROTEIN 1"/>
    <property type="match status" value="1"/>
</dbReference>
<dbReference type="PANTHER" id="PTHR19316">
    <property type="entry name" value="PROTEIN FOLDING REGULATOR"/>
    <property type="match status" value="1"/>
</dbReference>
<dbReference type="Pfam" id="PF08609">
    <property type="entry name" value="Fes1"/>
    <property type="match status" value="1"/>
</dbReference>
<dbReference type="SMART" id="SM00185">
    <property type="entry name" value="ARM"/>
    <property type="match status" value="3"/>
</dbReference>
<dbReference type="SUPFAM" id="SSF48371">
    <property type="entry name" value="ARM repeat"/>
    <property type="match status" value="1"/>
</dbReference>
<organism>
    <name type="scientific">Yarrowia lipolytica (strain CLIB 122 / E 150)</name>
    <name type="common">Yeast</name>
    <name type="synonym">Candida lipolytica</name>
    <dbReference type="NCBI Taxonomy" id="284591"/>
    <lineage>
        <taxon>Eukaryota</taxon>
        <taxon>Fungi</taxon>
        <taxon>Dikarya</taxon>
        <taxon>Ascomycota</taxon>
        <taxon>Saccharomycotina</taxon>
        <taxon>Dipodascomycetes</taxon>
        <taxon>Dipodascales</taxon>
        <taxon>Dipodascales incertae sedis</taxon>
        <taxon>Yarrowia</taxon>
    </lineage>
</organism>